<dbReference type="EC" id="2.4.99.12" evidence="3 4"/>
<dbReference type="EC" id="2.4.99.13" evidence="3 4"/>
<dbReference type="EMBL" id="M60670">
    <property type="protein sequence ID" value="AAA24043.1"/>
    <property type="molecule type" value="Genomic_DNA"/>
</dbReference>
<dbReference type="EMBL" id="M86305">
    <property type="protein sequence ID" value="AAA03745.1"/>
    <property type="molecule type" value="Genomic_DNA"/>
</dbReference>
<dbReference type="EMBL" id="U00039">
    <property type="protein sequence ID" value="AAB18610.1"/>
    <property type="molecule type" value="Genomic_DNA"/>
</dbReference>
<dbReference type="EMBL" id="U00096">
    <property type="protein sequence ID" value="AAC76657.1"/>
    <property type="molecule type" value="Genomic_DNA"/>
</dbReference>
<dbReference type="EMBL" id="AP009048">
    <property type="protein sequence ID" value="BAE77659.1"/>
    <property type="molecule type" value="Genomic_DNA"/>
</dbReference>
<dbReference type="PIR" id="JU0467">
    <property type="entry name" value="JU0467"/>
</dbReference>
<dbReference type="RefSeq" id="NP_418090.1">
    <property type="nucleotide sequence ID" value="NC_000913.3"/>
</dbReference>
<dbReference type="RefSeq" id="WP_000891564.1">
    <property type="nucleotide sequence ID" value="NZ_STEB01000024.1"/>
</dbReference>
<dbReference type="SMR" id="P0AC75"/>
<dbReference type="BioGRID" id="4263240">
    <property type="interactions" value="354"/>
</dbReference>
<dbReference type="BioGRID" id="853292">
    <property type="interactions" value="1"/>
</dbReference>
<dbReference type="DIP" id="DIP-48036N"/>
<dbReference type="FunCoup" id="P0AC75">
    <property type="interactions" value="350"/>
</dbReference>
<dbReference type="IntAct" id="P0AC75">
    <property type="interactions" value="16"/>
</dbReference>
<dbReference type="STRING" id="511145.b3633"/>
<dbReference type="jPOST" id="P0AC75"/>
<dbReference type="PaxDb" id="511145-b3633"/>
<dbReference type="DNASU" id="949048"/>
<dbReference type="EnsemblBacteria" id="AAC76657">
    <property type="protein sequence ID" value="AAC76657"/>
    <property type="gene ID" value="b3633"/>
</dbReference>
<dbReference type="GeneID" id="93778346"/>
<dbReference type="GeneID" id="949048"/>
<dbReference type="KEGG" id="ecj:JW3608"/>
<dbReference type="KEGG" id="eco:b3633"/>
<dbReference type="KEGG" id="ecoc:C3026_19690"/>
<dbReference type="PATRIC" id="fig|1411691.4.peg.3073"/>
<dbReference type="EchoBASE" id="EB0515"/>
<dbReference type="eggNOG" id="COG1519">
    <property type="taxonomic scope" value="Bacteria"/>
</dbReference>
<dbReference type="HOGENOM" id="CLU_036146_2_0_6"/>
<dbReference type="InParanoid" id="P0AC75"/>
<dbReference type="OMA" id="FIKYEFW"/>
<dbReference type="OrthoDB" id="9789797at2"/>
<dbReference type="PhylomeDB" id="P0AC75"/>
<dbReference type="BioCyc" id="EcoCyc:KDOTRANS-MONOMER"/>
<dbReference type="BioCyc" id="MetaCyc:KDOTRANS-MONOMER"/>
<dbReference type="BRENDA" id="2.4.99.12">
    <property type="organism ID" value="2026"/>
</dbReference>
<dbReference type="BRENDA" id="2.4.99.13">
    <property type="organism ID" value="2026"/>
</dbReference>
<dbReference type="SABIO-RK" id="P0AC75"/>
<dbReference type="UniPathway" id="UPA00360">
    <property type="reaction ID" value="UER00483"/>
</dbReference>
<dbReference type="UniPathway" id="UPA00360">
    <property type="reaction ID" value="UER00484"/>
</dbReference>
<dbReference type="UniPathway" id="UPA00958"/>
<dbReference type="PRO" id="PR:P0AC75"/>
<dbReference type="Proteomes" id="UP000000625">
    <property type="component" value="Chromosome"/>
</dbReference>
<dbReference type="GO" id="GO:0016020">
    <property type="term" value="C:membrane"/>
    <property type="evidence" value="ECO:0000314"/>
    <property type="project" value="EcoliWiki"/>
</dbReference>
<dbReference type="GO" id="GO:0005886">
    <property type="term" value="C:plasma membrane"/>
    <property type="evidence" value="ECO:0000314"/>
    <property type="project" value="EcoCyc"/>
</dbReference>
<dbReference type="GO" id="GO:0043842">
    <property type="term" value="F:Kdo transferase activity"/>
    <property type="evidence" value="ECO:0007669"/>
    <property type="project" value="UniProtKB-EC"/>
</dbReference>
<dbReference type="GO" id="GO:0016740">
    <property type="term" value="F:transferase activity"/>
    <property type="evidence" value="ECO:0000314"/>
    <property type="project" value="EcoCyc"/>
</dbReference>
<dbReference type="GO" id="GO:0036104">
    <property type="term" value="P:Kdo2-lipid A biosynthetic process"/>
    <property type="evidence" value="ECO:0007669"/>
    <property type="project" value="UniProtKB-UniPathway"/>
</dbReference>
<dbReference type="GO" id="GO:0009245">
    <property type="term" value="P:lipid A biosynthetic process"/>
    <property type="evidence" value="ECO:0000315"/>
    <property type="project" value="EcoliWiki"/>
</dbReference>
<dbReference type="GO" id="GO:0009244">
    <property type="term" value="P:lipopolysaccharide core region biosynthetic process"/>
    <property type="evidence" value="ECO:0007669"/>
    <property type="project" value="UniProtKB-UniPathway"/>
</dbReference>
<dbReference type="FunFam" id="3.40.50.11720:FF:000001">
    <property type="entry name" value="3-deoxy-D-manno-octulosonic acid transferase"/>
    <property type="match status" value="1"/>
</dbReference>
<dbReference type="FunFam" id="3.40.50.2000:FF:000032">
    <property type="entry name" value="3-deoxy-D-manno-octulosonic acid transferase"/>
    <property type="match status" value="1"/>
</dbReference>
<dbReference type="Gene3D" id="3.40.50.11720">
    <property type="entry name" value="3-Deoxy-D-manno-octulosonic-acid transferase, N-terminal domain"/>
    <property type="match status" value="1"/>
</dbReference>
<dbReference type="Gene3D" id="3.40.50.2000">
    <property type="entry name" value="Glycogen Phosphorylase B"/>
    <property type="match status" value="1"/>
</dbReference>
<dbReference type="InterPro" id="IPR001296">
    <property type="entry name" value="Glyco_trans_1"/>
</dbReference>
<dbReference type="InterPro" id="IPR007507">
    <property type="entry name" value="Glycos_transf_N"/>
</dbReference>
<dbReference type="InterPro" id="IPR038107">
    <property type="entry name" value="Glycos_transf_N_sf"/>
</dbReference>
<dbReference type="InterPro" id="IPR039901">
    <property type="entry name" value="Kdotransferase"/>
</dbReference>
<dbReference type="NCBIfam" id="NF004385">
    <property type="entry name" value="PRK05749.1-1"/>
    <property type="match status" value="1"/>
</dbReference>
<dbReference type="NCBIfam" id="NF004388">
    <property type="entry name" value="PRK05749.1-4"/>
    <property type="match status" value="1"/>
</dbReference>
<dbReference type="PANTHER" id="PTHR42755:SF1">
    <property type="entry name" value="3-DEOXY-D-MANNO-OCTULOSONIC ACID TRANSFERASE, MITOCHONDRIAL-RELATED"/>
    <property type="match status" value="1"/>
</dbReference>
<dbReference type="PANTHER" id="PTHR42755">
    <property type="entry name" value="3-DEOXY-MANNO-OCTULOSONATE CYTIDYLYLTRANSFERASE"/>
    <property type="match status" value="1"/>
</dbReference>
<dbReference type="Pfam" id="PF00534">
    <property type="entry name" value="Glycos_transf_1"/>
    <property type="match status" value="1"/>
</dbReference>
<dbReference type="Pfam" id="PF04413">
    <property type="entry name" value="Glycos_transf_N"/>
    <property type="match status" value="1"/>
</dbReference>
<dbReference type="SUPFAM" id="SSF53756">
    <property type="entry name" value="UDP-Glycosyltransferase/glycogen phosphorylase"/>
    <property type="match status" value="1"/>
</dbReference>
<evidence type="ECO:0000250" key="1"/>
<evidence type="ECO:0000255" key="2"/>
<evidence type="ECO:0000269" key="3">
    <source>
    </source>
</evidence>
<evidence type="ECO:0000269" key="4">
    <source>
    </source>
</evidence>
<evidence type="ECO:0000269" key="5">
    <source>
    </source>
</evidence>
<evidence type="ECO:0000269" key="6">
    <source>
    </source>
</evidence>
<evidence type="ECO:0000269" key="7">
    <source>
    </source>
</evidence>
<evidence type="ECO:0000305" key="8"/>
<evidence type="ECO:0000305" key="9">
    <source>
    </source>
</evidence>
<accession>P0AC75</accession>
<accession>P23282</accession>
<accession>Q2M7U7</accession>
<gene>
    <name type="primary">waaA</name>
    <name type="synonym">kdtA</name>
    <name type="ordered locus">b3633</name>
    <name type="ordered locus">JW3608</name>
</gene>
<comment type="function">
    <text evidence="3 4">Involved in lipopolysaccharide (LPS) biosynthesis. Catalyzes the transfer of two 3-deoxy-D-manno-octulosonate (Kdo) residues from CMP-Kdo to lipid IV(A), the tetraacyldisaccharide-1,4'-bisphosphate precursor of lipid A.</text>
</comment>
<comment type="catalytic activity">
    <reaction evidence="3 4">
        <text>lipid IVA (E. coli) + CMP-3-deoxy-beta-D-manno-octulosonate = alpha-Kdo-(2-&gt;6)-lipid IVA (E. coli) + CMP + H(+)</text>
        <dbReference type="Rhea" id="RHEA:28066"/>
        <dbReference type="ChEBI" id="CHEBI:15378"/>
        <dbReference type="ChEBI" id="CHEBI:58603"/>
        <dbReference type="ChEBI" id="CHEBI:60364"/>
        <dbReference type="ChEBI" id="CHEBI:60377"/>
        <dbReference type="ChEBI" id="CHEBI:85987"/>
        <dbReference type="EC" id="2.4.99.12"/>
    </reaction>
</comment>
<comment type="catalytic activity">
    <reaction evidence="3 4">
        <text>alpha-Kdo-(2-&gt;6)-lipid IVA (E. coli) + CMP-3-deoxy-beta-D-manno-octulosonate = alpha-Kdo-(2-&gt;4)-alpha-Kdo-(2-&gt;6)-lipid IVA (E. coli) + CMP + H(+)</text>
        <dbReference type="Rhea" id="RHEA:28062"/>
        <dbReference type="ChEBI" id="CHEBI:15378"/>
        <dbReference type="ChEBI" id="CHEBI:60364"/>
        <dbReference type="ChEBI" id="CHEBI:60365"/>
        <dbReference type="ChEBI" id="CHEBI:60377"/>
        <dbReference type="ChEBI" id="CHEBI:85987"/>
        <dbReference type="EC" id="2.4.99.13"/>
    </reaction>
</comment>
<comment type="activity regulation">
    <text evidence="4">Catalytic activity is inhibited by the antibiotic polymixin B and by Re endotoxin.</text>
</comment>
<comment type="biophysicochemical properties">
    <kinetics>
        <KM evidence="4">52 uM for lipid IV(A) (at pH 8)</KM>
        <KM evidence="4">88 uM for CMP-Kdo (at pH 8)</KM>
        <Vmax evidence="4">18.0 umol/min/mg enzyme (at pH 8)</Vmax>
    </kinetics>
    <phDependence>
        <text evidence="4">Optimum pH is 7.</text>
    </phDependence>
</comment>
<comment type="pathway">
    <text evidence="4">Glycolipid biosynthesis; KDO(2)-lipid A biosynthesis; KDO(2)-lipid A from CMP-3-deoxy-D-manno-octulosonate and lipid IV(A): step 1/4.</text>
</comment>
<comment type="pathway">
    <text evidence="4">Glycolipid biosynthesis; KDO(2)-lipid A biosynthesis; KDO(2)-lipid A from CMP-3-deoxy-D-manno-octulosonate and lipid IV(A): step 2/4.</text>
</comment>
<comment type="pathway">
    <text evidence="4">Bacterial outer membrane biogenesis; LPS core biosynthesis.</text>
</comment>
<comment type="subcellular location">
    <subcellularLocation>
        <location evidence="9">Cell inner membrane</location>
        <topology evidence="9">Single-pass membrane protein</topology>
        <orientation evidence="9">Cytoplasmic side</orientation>
    </subcellularLocation>
</comment>
<comment type="domain">
    <text evidence="6">The N-terminal half of KdtA is responsible for determining the number of Kdo residues that are transferred to lipid IVA.</text>
</comment>
<comment type="PTM">
    <text evidence="5">Degraded by the protease FtsH; therefore FtsH regulates the addition of the sugar moiety to the LPS and thus the maturation of the LPS precursor.</text>
</comment>
<comment type="disruption phenotype">
    <text evidence="7">Cells lacking this gene display growth defects, absence of Kdo transferase activity, and accumulate massive amounts of lipid IV(A).</text>
</comment>
<comment type="similarity">
    <text evidence="8">Belongs to the glycosyltransferase group 1 family. Glycosyltransferase 30 subfamily.</text>
</comment>
<proteinExistence type="evidence at protein level"/>
<organism>
    <name type="scientific">Escherichia coli (strain K12)</name>
    <dbReference type="NCBI Taxonomy" id="83333"/>
    <lineage>
        <taxon>Bacteria</taxon>
        <taxon>Pseudomonadati</taxon>
        <taxon>Pseudomonadota</taxon>
        <taxon>Gammaproteobacteria</taxon>
        <taxon>Enterobacterales</taxon>
        <taxon>Enterobacteriaceae</taxon>
        <taxon>Escherichia</taxon>
    </lineage>
</organism>
<feature type="chain" id="PRO_0000080286" description="3-deoxy-D-manno-octulosonic acid transferase">
    <location>
        <begin position="1"/>
        <end position="425"/>
    </location>
</feature>
<feature type="transmembrane region" description="Helical; Signal-anchor" evidence="2">
    <location>
        <begin position="3"/>
        <end position="23"/>
    </location>
</feature>
<feature type="active site" description="Proton acceptor" evidence="1">
    <location>
        <position position="60"/>
    </location>
</feature>
<feature type="binding site" evidence="1">
    <location>
        <begin position="268"/>
        <end position="269"/>
    </location>
    <ligand>
        <name>CMP</name>
        <dbReference type="ChEBI" id="CHEBI:60377"/>
    </ligand>
</feature>
<feature type="binding site" evidence="1">
    <location>
        <begin position="309"/>
        <end position="311"/>
    </location>
    <ligand>
        <name>CMP</name>
        <dbReference type="ChEBI" id="CHEBI:60377"/>
    </ligand>
</feature>
<feature type="binding site" evidence="1">
    <location>
        <begin position="335"/>
        <end position="338"/>
    </location>
    <ligand>
        <name>CMP</name>
        <dbReference type="ChEBI" id="CHEBI:60377"/>
    </ligand>
</feature>
<feature type="site" description="Transition state stabilizer" evidence="1">
    <location>
        <position position="130"/>
    </location>
</feature>
<feature type="site" description="Transition state stabilizer" evidence="1">
    <location>
        <position position="208"/>
    </location>
</feature>
<protein>
    <recommendedName>
        <fullName>3-deoxy-D-manno-octulosonic acid transferase</fullName>
        <shortName>Kdo transferase</shortName>
        <ecNumber evidence="3 4">2.4.99.12</ecNumber>
        <ecNumber evidence="3 4">2.4.99.13</ecNumber>
    </recommendedName>
    <alternativeName>
        <fullName>Bifunctional Kdo transferase</fullName>
    </alternativeName>
    <alternativeName>
        <fullName>Kdo-lipid IV(A) 3-deoxy-D-manno-octulosonic acid transferase</fullName>
    </alternativeName>
    <alternativeName>
        <fullName>Lipid IV(A) 3-deoxy-D-manno-octulosonic acid transferase</fullName>
    </alternativeName>
</protein>
<keyword id="KW-0997">Cell inner membrane</keyword>
<keyword id="KW-1003">Cell membrane</keyword>
<keyword id="KW-0448">Lipopolysaccharide biosynthesis</keyword>
<keyword id="KW-0472">Membrane</keyword>
<keyword id="KW-1185">Reference proteome</keyword>
<keyword id="KW-0735">Signal-anchor</keyword>
<keyword id="KW-0808">Transferase</keyword>
<keyword id="KW-0812">Transmembrane</keyword>
<keyword id="KW-1133">Transmembrane helix</keyword>
<reference key="1">
    <citation type="journal article" date="1991" name="J. Biol. Chem.">
        <title>A gene coding for 3-deoxy-D-manno-octulosonic-acid transferase in Escherichia coli. Identification, mapping, cloning, and sequencing.</title>
        <authorList>
            <person name="Clementz T."/>
            <person name="Raetz C.R.H."/>
        </authorList>
    </citation>
    <scope>NUCLEOTIDE SEQUENCE [GENOMIC DNA]</scope>
    <source>
        <strain>K12</strain>
    </source>
</reference>
<reference key="2">
    <citation type="journal article" date="1994" name="Nucleic Acids Res.">
        <title>Analysis of the Escherichia coli genome. V. DNA sequence of the region from 76.0 to 81.5 minutes.</title>
        <authorList>
            <person name="Sofia H.J."/>
            <person name="Burland V."/>
            <person name="Daniels D.L."/>
            <person name="Plunkett G. III"/>
            <person name="Blattner F.R."/>
        </authorList>
    </citation>
    <scope>NUCLEOTIDE SEQUENCE [LARGE SCALE GENOMIC DNA]</scope>
    <source>
        <strain>K12 / MG1655 / ATCC 47076</strain>
    </source>
</reference>
<reference key="3">
    <citation type="journal article" date="1997" name="Science">
        <title>The complete genome sequence of Escherichia coli K-12.</title>
        <authorList>
            <person name="Blattner F.R."/>
            <person name="Plunkett G. III"/>
            <person name="Bloch C.A."/>
            <person name="Perna N.T."/>
            <person name="Burland V."/>
            <person name="Riley M."/>
            <person name="Collado-Vides J."/>
            <person name="Glasner J.D."/>
            <person name="Rode C.K."/>
            <person name="Mayhew G.F."/>
            <person name="Gregor J."/>
            <person name="Davis N.W."/>
            <person name="Kirkpatrick H.A."/>
            <person name="Goeden M.A."/>
            <person name="Rose D.J."/>
            <person name="Mau B."/>
            <person name="Shao Y."/>
        </authorList>
    </citation>
    <scope>NUCLEOTIDE SEQUENCE [LARGE SCALE GENOMIC DNA]</scope>
    <source>
        <strain>K12 / MG1655 / ATCC 47076</strain>
    </source>
</reference>
<reference key="4">
    <citation type="journal article" date="2006" name="Mol. Syst. Biol.">
        <title>Highly accurate genome sequences of Escherichia coli K-12 strains MG1655 and W3110.</title>
        <authorList>
            <person name="Hayashi K."/>
            <person name="Morooka N."/>
            <person name="Yamamoto Y."/>
            <person name="Fujita K."/>
            <person name="Isono K."/>
            <person name="Choi S."/>
            <person name="Ohtsubo E."/>
            <person name="Baba T."/>
            <person name="Wanner B.L."/>
            <person name="Mori H."/>
            <person name="Horiuchi T."/>
        </authorList>
    </citation>
    <scope>NUCLEOTIDE SEQUENCE [LARGE SCALE GENOMIC DNA]</scope>
    <source>
        <strain>K12 / W3110 / ATCC 27325 / DSM 5911</strain>
    </source>
</reference>
<reference key="5">
    <citation type="journal article" date="1992" name="J. Bacteriol.">
        <title>The gene coding for 3-deoxy-manno-octulosonic acid transferase and the rfaQ gene are transcribed from divergently arranged promoters in Escherichia coli.</title>
        <authorList>
            <person name="Clementz T."/>
        </authorList>
    </citation>
    <scope>NUCLEOTIDE SEQUENCE [GENOMIC DNA] OF 1-25</scope>
    <source>
        <strain>K12</strain>
    </source>
</reference>
<reference key="6">
    <citation type="journal article" date="1992" name="J. Biol. Chem.">
        <title>Biosynthesis of endotoxins. Purification and catalytic properties of 3-deoxy-D-manno-octulosonic acid transferase from Escherichia coli.</title>
        <authorList>
            <person name="Belunis C.J."/>
            <person name="Raetz C.R."/>
        </authorList>
    </citation>
    <scope>FUNCTION</scope>
    <scope>CATALYTIC ACTIVITY</scope>
    <scope>BIFUNCTIONALITY</scope>
    <scope>SUBSTRATE SPECIFICITY</scope>
    <scope>BIOPHYSICOCHEMICAL PROPERTIES</scope>
    <scope>ACTIVITY REGULATION</scope>
    <scope>SUBCELLULAR LOCATION</scope>
    <scope>PATHWAY</scope>
    <source>
        <strain>K12</strain>
    </source>
</reference>
<reference key="7">
    <citation type="journal article" date="1995" name="J. Biol. Chem.">
        <title>Inhibition of lipopolysaccharide biosynthesis and cell growth following inactivation of the kdtA gene in Escherichia coli.</title>
        <authorList>
            <person name="Belunis C.J."/>
            <person name="Clementz T."/>
            <person name="Carty S.M."/>
            <person name="Raetz C.R."/>
        </authorList>
    </citation>
    <scope>DISRUPTION PHENOTYPE</scope>
    <source>
        <strain>K12 / JM109 / ATCC 53323</strain>
        <strain>K12 / MC1061 / ATCC 53338 / DSM 7140</strain>
    </source>
</reference>
<reference key="8">
    <citation type="journal article" date="2000" name="Eur. J. Biochem.">
        <title>Comparative analyses of secondary gene products of 3-deoxy-D-manno-oct-2-ulosonic acid transferases from Chlamydiaceae in Escherichia coli K-12.</title>
        <authorList>
            <person name="Brabetz W."/>
            <person name="Lindner B."/>
            <person name="Brade H."/>
        </authorList>
    </citation>
    <scope>FUNCTION</scope>
    <scope>CATALYTIC ACTIVITY</scope>
    <scope>BIFUNCTIONALITY</scope>
    <source>
        <strain>TW-183</strain>
    </source>
</reference>
<reference key="9">
    <citation type="journal article" date="2008" name="J. Bacteriol.">
        <title>Dual role of FtsH in regulating lipopolysaccharide biosynthesis in Escherichia coli.</title>
        <authorList>
            <person name="Katz C."/>
            <person name="Ron E.Z."/>
        </authorList>
    </citation>
    <scope>SUBSTRATE FOR FTSH PROTEASE COMPLEX</scope>
    <source>
        <strain>K12 / MG1655 / ATCC 47076</strain>
    </source>
</reference>
<reference key="10">
    <citation type="journal article" date="2010" name="Biochemistry">
        <title>Interchangeable domains in the Kdo transferases of Escherichia coli and Haemophilus influenzae.</title>
        <authorList>
            <person name="Chung H.S."/>
            <person name="Raetz C.R."/>
        </authorList>
    </citation>
    <scope>DOMAIN</scope>
    <source>
        <strain>K12 / W3110 / ATCC 27325 / DSM 5911</strain>
    </source>
</reference>
<sequence length="425" mass="47291">MLELLYTALLYLIQPLIWIRLWVRGRKAPAYRKRWGERYGFYRHPLKPGGIMLHSVSVGETLAAIPLVRALRHRYPDLPITVTTMTPTGSERVQSAFGKDVQHVYLPYDLPDALNRFLNKVDPKLVLIMETELWPNLIAALHKRKIPLVIANARLSARSAAGYAKLGKFVRRLLRRITLIAAQNEEDGARFVALGAKNNQVTVTGSLKFDISVTPQLAAKAVTLRRQWAPHRPVWIATSTHEGEESVVIAAHQALLQQFPNLLLILVPRHPERFPDAINLVRQAGLSYITRSSGEVPSTSTQVVVGDTMGELMLLYGIADLAFVGGSLVERGGHNPLEAAAHAIPVLMGPHTFNFKDICARLEQASGLITVTDATTLAKEVSSLLTDADYRSFYGRHAVEVLYQNQGALQRLLQLLEPYLPPKTH</sequence>
<name>KDTA_ECOLI</name>